<organism>
    <name type="scientific">Listeria innocua serovar 6a (strain ATCC BAA-680 / CLIP 11262)</name>
    <dbReference type="NCBI Taxonomy" id="272626"/>
    <lineage>
        <taxon>Bacteria</taxon>
        <taxon>Bacillati</taxon>
        <taxon>Bacillota</taxon>
        <taxon>Bacilli</taxon>
        <taxon>Bacillales</taxon>
        <taxon>Listeriaceae</taxon>
        <taxon>Listeria</taxon>
    </lineage>
</organism>
<feature type="chain" id="PRO_0000142020" description="1-(5-phosphoribosyl)-5-[(5-phosphoribosylamino)methylideneamino] imidazole-4-carboxamide isomerase">
    <location>
        <begin position="1"/>
        <end position="240"/>
    </location>
</feature>
<feature type="active site" description="Proton acceptor" evidence="1">
    <location>
        <position position="8"/>
    </location>
</feature>
<feature type="active site" description="Proton donor" evidence="1">
    <location>
        <position position="129"/>
    </location>
</feature>
<protein>
    <recommendedName>
        <fullName>1-(5-phosphoribosyl)-5-[(5-phosphoribosylamino)methylideneamino] imidazole-4-carboxamide isomerase</fullName>
        <ecNumber>5.3.1.16</ecNumber>
    </recommendedName>
    <alternativeName>
        <fullName>Phosphoribosylformimino-5-aminoimidazole carboxamide ribotide isomerase</fullName>
    </alternativeName>
</protein>
<sequence>MQIFPAIDLKNGQCVRLFQGDFSKKIIVNEDPIAQAKSFAKSGATYLHIVDLDGALEGRPVNLEIIQQMKKAAKVPVQVGGGIRSMAQIDYYLQSGIDRVIIGSAALTDPDFLQAAVKKYGSKIAAGIDAKNGFVATSGWLNISQVSFLDLAKQMEAMDVETIIYTDISRDGTLTGPNLEQMAALQKHVTINLIASGGVSSRADLEALSELGLYGAIAGKALYNGNISMSDIVEVEQSAY</sequence>
<dbReference type="EC" id="5.3.1.16"/>
<dbReference type="EMBL" id="AL596165">
    <property type="protein sequence ID" value="CAC95805.1"/>
    <property type="molecule type" value="Genomic_DNA"/>
</dbReference>
<dbReference type="PIR" id="AE1504">
    <property type="entry name" value="AE1504"/>
</dbReference>
<dbReference type="RefSeq" id="WP_010990493.1">
    <property type="nucleotide sequence ID" value="NC_003212.1"/>
</dbReference>
<dbReference type="SMR" id="Q92E87"/>
<dbReference type="STRING" id="272626.gene:17564899"/>
<dbReference type="GeneID" id="93234021"/>
<dbReference type="KEGG" id="lin:hisA"/>
<dbReference type="eggNOG" id="COG0106">
    <property type="taxonomic scope" value="Bacteria"/>
</dbReference>
<dbReference type="HOGENOM" id="CLU_048577_1_1_9"/>
<dbReference type="OrthoDB" id="9807749at2"/>
<dbReference type="UniPathway" id="UPA00031">
    <property type="reaction ID" value="UER00009"/>
</dbReference>
<dbReference type="Proteomes" id="UP000002513">
    <property type="component" value="Chromosome"/>
</dbReference>
<dbReference type="GO" id="GO:0005737">
    <property type="term" value="C:cytoplasm"/>
    <property type="evidence" value="ECO:0007669"/>
    <property type="project" value="UniProtKB-SubCell"/>
</dbReference>
<dbReference type="GO" id="GO:0003949">
    <property type="term" value="F:1-(5-phosphoribosyl)-5-[(5-phosphoribosylamino)methylideneamino]imidazole-4-carboxamide isomerase activity"/>
    <property type="evidence" value="ECO:0007669"/>
    <property type="project" value="UniProtKB-UniRule"/>
</dbReference>
<dbReference type="GO" id="GO:0000105">
    <property type="term" value="P:L-histidine biosynthetic process"/>
    <property type="evidence" value="ECO:0007669"/>
    <property type="project" value="UniProtKB-UniRule"/>
</dbReference>
<dbReference type="GO" id="GO:0000162">
    <property type="term" value="P:L-tryptophan biosynthetic process"/>
    <property type="evidence" value="ECO:0007669"/>
    <property type="project" value="TreeGrafter"/>
</dbReference>
<dbReference type="CDD" id="cd04732">
    <property type="entry name" value="HisA"/>
    <property type="match status" value="1"/>
</dbReference>
<dbReference type="FunFam" id="3.20.20.70:FF:000009">
    <property type="entry name" value="1-(5-phosphoribosyl)-5-[(5-phosphoribosylamino)methylideneamino] imidazole-4-carboxamide isomerase"/>
    <property type="match status" value="1"/>
</dbReference>
<dbReference type="Gene3D" id="3.20.20.70">
    <property type="entry name" value="Aldolase class I"/>
    <property type="match status" value="1"/>
</dbReference>
<dbReference type="HAMAP" id="MF_01014">
    <property type="entry name" value="HisA"/>
    <property type="match status" value="1"/>
</dbReference>
<dbReference type="InterPro" id="IPR013785">
    <property type="entry name" value="Aldolase_TIM"/>
</dbReference>
<dbReference type="InterPro" id="IPR006062">
    <property type="entry name" value="His_biosynth"/>
</dbReference>
<dbReference type="InterPro" id="IPR006063">
    <property type="entry name" value="HisA_bact_arch"/>
</dbReference>
<dbReference type="InterPro" id="IPR044524">
    <property type="entry name" value="Isoase_HisA-like"/>
</dbReference>
<dbReference type="InterPro" id="IPR023016">
    <property type="entry name" value="Isoase_HisA-like_bact"/>
</dbReference>
<dbReference type="InterPro" id="IPR011060">
    <property type="entry name" value="RibuloseP-bd_barrel"/>
</dbReference>
<dbReference type="NCBIfam" id="TIGR00007">
    <property type="entry name" value="1-(5-phosphoribosyl)-5-[(5-phosphoribosylamino)methylideneamino]imidazole-4-carboxamide isomerase"/>
    <property type="match status" value="1"/>
</dbReference>
<dbReference type="PANTHER" id="PTHR43090">
    <property type="entry name" value="1-(5-PHOSPHORIBOSYL)-5-[(5-PHOSPHORIBOSYLAMINO)METHYLIDENEAMINO] IMIDAZOLE-4-CARBOXAMIDE ISOMERASE"/>
    <property type="match status" value="1"/>
</dbReference>
<dbReference type="PANTHER" id="PTHR43090:SF2">
    <property type="entry name" value="1-(5-PHOSPHORIBOSYL)-5-[(5-PHOSPHORIBOSYLAMINO)METHYLIDENEAMINO] IMIDAZOLE-4-CARBOXAMIDE ISOMERASE"/>
    <property type="match status" value="1"/>
</dbReference>
<dbReference type="Pfam" id="PF00977">
    <property type="entry name" value="His_biosynth"/>
    <property type="match status" value="1"/>
</dbReference>
<dbReference type="SUPFAM" id="SSF51366">
    <property type="entry name" value="Ribulose-phoshate binding barrel"/>
    <property type="match status" value="1"/>
</dbReference>
<accession>Q92E87</accession>
<comment type="catalytic activity">
    <reaction>
        <text>1-(5-phospho-beta-D-ribosyl)-5-[(5-phospho-beta-D-ribosylamino)methylideneamino]imidazole-4-carboxamide = 5-[(5-phospho-1-deoxy-D-ribulos-1-ylimino)methylamino]-1-(5-phospho-beta-D-ribosyl)imidazole-4-carboxamide</text>
        <dbReference type="Rhea" id="RHEA:15469"/>
        <dbReference type="ChEBI" id="CHEBI:58435"/>
        <dbReference type="ChEBI" id="CHEBI:58525"/>
        <dbReference type="EC" id="5.3.1.16"/>
    </reaction>
</comment>
<comment type="pathway">
    <text>Amino-acid biosynthesis; L-histidine biosynthesis; L-histidine from 5-phospho-alpha-D-ribose 1-diphosphate: step 4/9.</text>
</comment>
<comment type="subcellular location">
    <subcellularLocation>
        <location evidence="1">Cytoplasm</location>
    </subcellularLocation>
</comment>
<comment type="similarity">
    <text evidence="2">Belongs to the HisA/HisF family.</text>
</comment>
<evidence type="ECO:0000250" key="1"/>
<evidence type="ECO:0000305" key="2"/>
<reference key="1">
    <citation type="journal article" date="2001" name="Science">
        <title>Comparative genomics of Listeria species.</title>
        <authorList>
            <person name="Glaser P."/>
            <person name="Frangeul L."/>
            <person name="Buchrieser C."/>
            <person name="Rusniok C."/>
            <person name="Amend A."/>
            <person name="Baquero F."/>
            <person name="Berche P."/>
            <person name="Bloecker H."/>
            <person name="Brandt P."/>
            <person name="Chakraborty T."/>
            <person name="Charbit A."/>
            <person name="Chetouani F."/>
            <person name="Couve E."/>
            <person name="de Daruvar A."/>
            <person name="Dehoux P."/>
            <person name="Domann E."/>
            <person name="Dominguez-Bernal G."/>
            <person name="Duchaud E."/>
            <person name="Durant L."/>
            <person name="Dussurget O."/>
            <person name="Entian K.-D."/>
            <person name="Fsihi H."/>
            <person name="Garcia-del Portillo F."/>
            <person name="Garrido P."/>
            <person name="Gautier L."/>
            <person name="Goebel W."/>
            <person name="Gomez-Lopez N."/>
            <person name="Hain T."/>
            <person name="Hauf J."/>
            <person name="Jackson D."/>
            <person name="Jones L.-M."/>
            <person name="Kaerst U."/>
            <person name="Kreft J."/>
            <person name="Kuhn M."/>
            <person name="Kunst F."/>
            <person name="Kurapkat G."/>
            <person name="Madueno E."/>
            <person name="Maitournam A."/>
            <person name="Mata Vicente J."/>
            <person name="Ng E."/>
            <person name="Nedjari H."/>
            <person name="Nordsiek G."/>
            <person name="Novella S."/>
            <person name="de Pablos B."/>
            <person name="Perez-Diaz J.-C."/>
            <person name="Purcell R."/>
            <person name="Remmel B."/>
            <person name="Rose M."/>
            <person name="Schlueter T."/>
            <person name="Simoes N."/>
            <person name="Tierrez A."/>
            <person name="Vazquez-Boland J.-A."/>
            <person name="Voss H."/>
            <person name="Wehland J."/>
            <person name="Cossart P."/>
        </authorList>
    </citation>
    <scope>NUCLEOTIDE SEQUENCE [LARGE SCALE GENOMIC DNA]</scope>
    <source>
        <strain>ATCC BAA-680 / CLIP 11262</strain>
    </source>
</reference>
<keyword id="KW-0028">Amino-acid biosynthesis</keyword>
<keyword id="KW-0963">Cytoplasm</keyword>
<keyword id="KW-0368">Histidine biosynthesis</keyword>
<keyword id="KW-0413">Isomerase</keyword>
<proteinExistence type="inferred from homology"/>
<name>HIS4_LISIN</name>
<gene>
    <name type="primary">hisA</name>
    <name type="ordered locus">lin0573</name>
</gene>